<keyword id="KW-1015">Disulfide bond</keyword>
<keyword id="KW-0325">Glycoprotein</keyword>
<keyword id="KW-1185">Reference proteome</keyword>
<keyword id="KW-0964">Secreted</keyword>
<keyword id="KW-0732">Signal</keyword>
<keyword id="KW-0813">Transport</keyword>
<proteinExistence type="evidence at transcript level"/>
<sequence>MGPWWALWLILTLPQILESQISAMSQGFPQMTSFQSDQFQGEWFVLGLADNTFRREHRALLNFFTTLFELKEKSQFQVTNSMTRGKHCNTWSYTLIPATKPGQFTRDNRGSGPGADRENIQVIETDYITFALVLSLRQTSSQNITRVSLLGRNWRLSHKTIDKFICLTRTQNLTKDNFLFPDLSDWLPDPQVC</sequence>
<reference key="1">
    <citation type="journal article" date="2004" name="Gene">
        <title>Molecular evolution of epididymal lipocalin genes localized on mouse chromosome 2.</title>
        <authorList>
            <person name="Suzuki K."/>
            <person name="Lareyre J.-J."/>
            <person name="Sanchez D."/>
            <person name="Gutierrez G."/>
            <person name="Araki Y."/>
            <person name="Matusik R.J."/>
            <person name="Orgebin-Crist M.-C."/>
        </authorList>
    </citation>
    <scope>NUCLEOTIDE SEQUENCE [MRNA]</scope>
    <scope>TISSUE SPECIFICITY</scope>
    <source>
        <strain>C57BL/6 X DBA/2</strain>
        <tissue>Epididymis</tissue>
    </source>
</reference>
<organism>
    <name type="scientific">Mus musculus</name>
    <name type="common">Mouse</name>
    <dbReference type="NCBI Taxonomy" id="10090"/>
    <lineage>
        <taxon>Eukaryota</taxon>
        <taxon>Metazoa</taxon>
        <taxon>Chordata</taxon>
        <taxon>Craniata</taxon>
        <taxon>Vertebrata</taxon>
        <taxon>Euteleostomi</taxon>
        <taxon>Mammalia</taxon>
        <taxon>Eutheria</taxon>
        <taxon>Euarchontoglires</taxon>
        <taxon>Glires</taxon>
        <taxon>Rodentia</taxon>
        <taxon>Myomorpha</taxon>
        <taxon>Muroidea</taxon>
        <taxon>Muridae</taxon>
        <taxon>Murinae</taxon>
        <taxon>Mus</taxon>
        <taxon>Mus</taxon>
    </lineage>
</organism>
<protein>
    <recommendedName>
        <fullName>Epididymal-specific lipocalin-12</fullName>
    </recommendedName>
</protein>
<evidence type="ECO:0000250" key="1"/>
<evidence type="ECO:0000255" key="2"/>
<evidence type="ECO:0000269" key="3">
    <source>
    </source>
</evidence>
<evidence type="ECO:0000305" key="4"/>
<gene>
    <name type="primary">Lcn12</name>
</gene>
<feature type="signal peptide" evidence="2">
    <location>
        <begin position="1"/>
        <end position="19"/>
    </location>
</feature>
<feature type="chain" id="PRO_0000017923" description="Epididymal-specific lipocalin-12">
    <location>
        <begin position="20"/>
        <end position="193"/>
    </location>
</feature>
<feature type="glycosylation site" description="N-linked (GlcNAc...) asparagine" evidence="2">
    <location>
        <position position="143"/>
    </location>
</feature>
<feature type="glycosylation site" description="N-linked (GlcNAc...) asparagine" evidence="2">
    <location>
        <position position="172"/>
    </location>
</feature>
<feature type="disulfide bond" evidence="1">
    <location>
        <begin position="88"/>
        <end position="193"/>
    </location>
</feature>
<dbReference type="EMBL" id="AY299493">
    <property type="protein sequence ID" value="AAQ63836.1"/>
    <property type="molecule type" value="mRNA"/>
</dbReference>
<dbReference type="CCDS" id="CCDS15776.1"/>
<dbReference type="RefSeq" id="NP_084234.1">
    <property type="nucleotide sequence ID" value="NM_029958.1"/>
</dbReference>
<dbReference type="SMR" id="Q6JVL5"/>
<dbReference type="FunCoup" id="Q6JVL5">
    <property type="interactions" value="201"/>
</dbReference>
<dbReference type="STRING" id="10090.ENSMUSP00000028312"/>
<dbReference type="GlyCosmos" id="Q6JVL5">
    <property type="glycosylation" value="2 sites, No reported glycans"/>
</dbReference>
<dbReference type="GlyGen" id="Q6JVL5">
    <property type="glycosylation" value="2 sites"/>
</dbReference>
<dbReference type="PaxDb" id="10090-ENSMUSP00000028312"/>
<dbReference type="ProteomicsDB" id="292240"/>
<dbReference type="Antibodypedia" id="18839">
    <property type="antibodies" value="60 antibodies from 13 providers"/>
</dbReference>
<dbReference type="DNASU" id="77701"/>
<dbReference type="Ensembl" id="ENSMUST00000028312.13">
    <property type="protein sequence ID" value="ENSMUSP00000028312.7"/>
    <property type="gene ID" value="ENSMUSG00000026943.13"/>
</dbReference>
<dbReference type="GeneID" id="77701"/>
<dbReference type="KEGG" id="mmu:77701"/>
<dbReference type="UCSC" id="uc008ish.1">
    <property type="organism name" value="mouse"/>
</dbReference>
<dbReference type="AGR" id="MGI:1924951"/>
<dbReference type="CTD" id="286256"/>
<dbReference type="MGI" id="MGI:1924951">
    <property type="gene designation" value="Lcn12"/>
</dbReference>
<dbReference type="VEuPathDB" id="HostDB:ENSMUSG00000026943"/>
<dbReference type="eggNOG" id="ENOG502S9R9">
    <property type="taxonomic scope" value="Eukaryota"/>
</dbReference>
<dbReference type="GeneTree" id="ENSGT01050000244868"/>
<dbReference type="InParanoid" id="Q6JVL5"/>
<dbReference type="OMA" id="RCDTWSY"/>
<dbReference type="OrthoDB" id="9664333at2759"/>
<dbReference type="PhylomeDB" id="Q6JVL5"/>
<dbReference type="TreeFam" id="TF336103"/>
<dbReference type="Reactome" id="R-MMU-804914">
    <property type="pathway name" value="Transport of fatty acids"/>
</dbReference>
<dbReference type="BioGRID-ORCS" id="77701">
    <property type="hits" value="1 hit in 83 CRISPR screens"/>
</dbReference>
<dbReference type="PRO" id="PR:Q6JVL5"/>
<dbReference type="Proteomes" id="UP000000589">
    <property type="component" value="Chromosome 2"/>
</dbReference>
<dbReference type="RNAct" id="Q6JVL5">
    <property type="molecule type" value="protein"/>
</dbReference>
<dbReference type="Bgee" id="ENSMUSG00000026943">
    <property type="expression patterns" value="Expressed in esophagus and 12 other cell types or tissues"/>
</dbReference>
<dbReference type="ExpressionAtlas" id="Q6JVL5">
    <property type="expression patterns" value="baseline and differential"/>
</dbReference>
<dbReference type="GO" id="GO:0005576">
    <property type="term" value="C:extracellular region"/>
    <property type="evidence" value="ECO:0007669"/>
    <property type="project" value="UniProtKB-SubCell"/>
</dbReference>
<dbReference type="GO" id="GO:0001972">
    <property type="term" value="F:retinoic acid binding"/>
    <property type="evidence" value="ECO:0000250"/>
    <property type="project" value="UniProtKB"/>
</dbReference>
<dbReference type="CDD" id="cd19458">
    <property type="entry name" value="lipocalin_12"/>
    <property type="match status" value="1"/>
</dbReference>
<dbReference type="FunFam" id="2.40.128.20:FF:000023">
    <property type="entry name" value="Epididymal-specific lipocalin-12"/>
    <property type="match status" value="1"/>
</dbReference>
<dbReference type="Gene3D" id="2.40.128.20">
    <property type="match status" value="1"/>
</dbReference>
<dbReference type="InterPro" id="IPR012674">
    <property type="entry name" value="Calycin"/>
</dbReference>
<dbReference type="InterPro" id="IPR003087">
    <property type="entry name" value="LCN2/LCN12"/>
</dbReference>
<dbReference type="InterPro" id="IPR002345">
    <property type="entry name" value="Lipocalin"/>
</dbReference>
<dbReference type="InterPro" id="IPR000566">
    <property type="entry name" value="Lipocln_cytosolic_FA-bd_dom"/>
</dbReference>
<dbReference type="PANTHER" id="PTHR11430:SF12">
    <property type="entry name" value="EPIDIDYMAL-SPECIFIC LIPOCALIN-12"/>
    <property type="match status" value="1"/>
</dbReference>
<dbReference type="PANTHER" id="PTHR11430">
    <property type="entry name" value="LIPOCALIN"/>
    <property type="match status" value="1"/>
</dbReference>
<dbReference type="Pfam" id="PF00061">
    <property type="entry name" value="Lipocalin"/>
    <property type="match status" value="1"/>
</dbReference>
<dbReference type="PRINTS" id="PR01275">
    <property type="entry name" value="NGELATINASE"/>
</dbReference>
<dbReference type="SUPFAM" id="SSF50814">
    <property type="entry name" value="Lipocalins"/>
    <property type="match status" value="1"/>
</dbReference>
<accession>Q6JVL5</accession>
<name>LCN12_MOUSE</name>
<comment type="function">
    <text evidence="1">Binds all-trans retinoic acid and may act as a retinoid carrier protein within the epididymis. May play a role in male fertility (By similarity).</text>
</comment>
<comment type="subunit">
    <text evidence="1">Monomer.</text>
</comment>
<comment type="subcellular location">
    <subcellularLocation>
        <location evidence="1">Secreted</location>
    </subcellularLocation>
</comment>
<comment type="tissue specificity">
    <text evidence="3">Expressed in epididymis.</text>
</comment>
<comment type="similarity">
    <text evidence="4">Belongs to the calycin superfamily. Lipocalin family.</text>
</comment>